<protein>
    <recommendedName>
        <fullName evidence="1">3-deoxy-manno-octulosonate cytidylyltransferase</fullName>
        <ecNumber evidence="1">2.7.7.38</ecNumber>
    </recommendedName>
    <alternativeName>
        <fullName evidence="1">CMP-2-keto-3-deoxyoctulosonic acid synthase</fullName>
        <shortName evidence="1">CKS</shortName>
        <shortName evidence="1">CMP-KDO synthase</shortName>
    </alternativeName>
</protein>
<proteinExistence type="inferred from homology"/>
<organism>
    <name type="scientific">Bordetella avium (strain 197N)</name>
    <dbReference type="NCBI Taxonomy" id="360910"/>
    <lineage>
        <taxon>Bacteria</taxon>
        <taxon>Pseudomonadati</taxon>
        <taxon>Pseudomonadota</taxon>
        <taxon>Betaproteobacteria</taxon>
        <taxon>Burkholderiales</taxon>
        <taxon>Alcaligenaceae</taxon>
        <taxon>Bordetella</taxon>
    </lineage>
</organism>
<name>KDSB_BORA1</name>
<evidence type="ECO:0000255" key="1">
    <source>
        <dbReference type="HAMAP-Rule" id="MF_00057"/>
    </source>
</evidence>
<reference key="1">
    <citation type="journal article" date="2006" name="J. Bacteriol.">
        <title>Comparison of the genome sequence of the poultry pathogen Bordetella avium with those of B. bronchiseptica, B. pertussis, and B. parapertussis reveals extensive diversity in surface structures associated with host interaction.</title>
        <authorList>
            <person name="Sebaihia M."/>
            <person name="Preston A."/>
            <person name="Maskell D.J."/>
            <person name="Kuzmiak H."/>
            <person name="Connell T.D."/>
            <person name="King N.D."/>
            <person name="Orndorff P.E."/>
            <person name="Miyamoto D.M."/>
            <person name="Thomson N.R."/>
            <person name="Harris D."/>
            <person name="Goble A."/>
            <person name="Lord A."/>
            <person name="Murphy L."/>
            <person name="Quail M.A."/>
            <person name="Rutter S."/>
            <person name="Squares R."/>
            <person name="Squares S."/>
            <person name="Woodward J."/>
            <person name="Parkhill J."/>
            <person name="Temple L.M."/>
        </authorList>
    </citation>
    <scope>NUCLEOTIDE SEQUENCE [LARGE SCALE GENOMIC DNA]</scope>
    <source>
        <strain>197N</strain>
    </source>
</reference>
<feature type="chain" id="PRO_0000370006" description="3-deoxy-manno-octulosonate cytidylyltransferase">
    <location>
        <begin position="1"/>
        <end position="274"/>
    </location>
</feature>
<comment type="function">
    <text evidence="1">Activates KDO (a required 8-carbon sugar) for incorporation into bacterial lipopolysaccharide in Gram-negative bacteria.</text>
</comment>
<comment type="catalytic activity">
    <reaction evidence="1">
        <text>3-deoxy-alpha-D-manno-oct-2-ulosonate + CTP = CMP-3-deoxy-beta-D-manno-octulosonate + diphosphate</text>
        <dbReference type="Rhea" id="RHEA:23448"/>
        <dbReference type="ChEBI" id="CHEBI:33019"/>
        <dbReference type="ChEBI" id="CHEBI:37563"/>
        <dbReference type="ChEBI" id="CHEBI:85986"/>
        <dbReference type="ChEBI" id="CHEBI:85987"/>
        <dbReference type="EC" id="2.7.7.38"/>
    </reaction>
</comment>
<comment type="pathway">
    <text evidence="1">Nucleotide-sugar biosynthesis; CMP-3-deoxy-D-manno-octulosonate biosynthesis; CMP-3-deoxy-D-manno-octulosonate from 3-deoxy-D-manno-octulosonate and CTP: step 1/1.</text>
</comment>
<comment type="pathway">
    <text evidence="1">Bacterial outer membrane biogenesis; lipopolysaccharide biosynthesis.</text>
</comment>
<comment type="subcellular location">
    <subcellularLocation>
        <location evidence="1">Cytoplasm</location>
    </subcellularLocation>
</comment>
<comment type="similarity">
    <text evidence="1">Belongs to the KdsB family.</text>
</comment>
<accession>Q2KZE5</accession>
<sequence length="274" mass="29201">MSFVALIPARAASIRLPDKPLADIAGKPMVVRVAERAALSGASLVCVATDDTRVERAVTEHGFPAVRTLSSHPTGTDRLAEAVRILGLPGDAIVVNVQGDEPLIEPTLIDGVAQLLADNPQADIATCACPLTDAQALFNPNVVKVVCGNDGRALYFSRAPIPWARDALAGGERMLAPGLPAWHHIGLYAYRVSFLQRFPTLAQGELERFESLEQLRAMEHGHTIVVSRISAAPAAGVDTPADLDRVRAIYLQAPKTEANQGLIQVQSDQGNDGR</sequence>
<gene>
    <name evidence="1" type="primary">kdsB</name>
    <name type="ordered locus">BAV2102</name>
</gene>
<keyword id="KW-0963">Cytoplasm</keyword>
<keyword id="KW-0448">Lipopolysaccharide biosynthesis</keyword>
<keyword id="KW-0548">Nucleotidyltransferase</keyword>
<keyword id="KW-1185">Reference proteome</keyword>
<keyword id="KW-0808">Transferase</keyword>
<dbReference type="EC" id="2.7.7.38" evidence="1"/>
<dbReference type="EMBL" id="AM167904">
    <property type="protein sequence ID" value="CAJ49712.1"/>
    <property type="molecule type" value="Genomic_DNA"/>
</dbReference>
<dbReference type="RefSeq" id="WP_012417768.1">
    <property type="nucleotide sequence ID" value="NC_010645.1"/>
</dbReference>
<dbReference type="SMR" id="Q2KZE5"/>
<dbReference type="STRING" id="360910.BAV2102"/>
<dbReference type="KEGG" id="bav:BAV2102"/>
<dbReference type="eggNOG" id="COG1212">
    <property type="taxonomic scope" value="Bacteria"/>
</dbReference>
<dbReference type="HOGENOM" id="CLU_065038_1_0_4"/>
<dbReference type="OrthoDB" id="9815559at2"/>
<dbReference type="UniPathway" id="UPA00030"/>
<dbReference type="UniPathway" id="UPA00358">
    <property type="reaction ID" value="UER00476"/>
</dbReference>
<dbReference type="Proteomes" id="UP000001977">
    <property type="component" value="Chromosome"/>
</dbReference>
<dbReference type="GO" id="GO:0005829">
    <property type="term" value="C:cytosol"/>
    <property type="evidence" value="ECO:0007669"/>
    <property type="project" value="TreeGrafter"/>
</dbReference>
<dbReference type="GO" id="GO:0008690">
    <property type="term" value="F:3-deoxy-manno-octulosonate cytidylyltransferase activity"/>
    <property type="evidence" value="ECO:0007669"/>
    <property type="project" value="UniProtKB-UniRule"/>
</dbReference>
<dbReference type="GO" id="GO:0033468">
    <property type="term" value="P:CMP-keto-3-deoxy-D-manno-octulosonic acid biosynthetic process"/>
    <property type="evidence" value="ECO:0007669"/>
    <property type="project" value="UniProtKB-UniRule"/>
</dbReference>
<dbReference type="GO" id="GO:0009103">
    <property type="term" value="P:lipopolysaccharide biosynthetic process"/>
    <property type="evidence" value="ECO:0007669"/>
    <property type="project" value="UniProtKB-UniRule"/>
</dbReference>
<dbReference type="CDD" id="cd02517">
    <property type="entry name" value="CMP-KDO-Synthetase"/>
    <property type="match status" value="1"/>
</dbReference>
<dbReference type="FunFam" id="3.90.550.10:FF:000011">
    <property type="entry name" value="3-deoxy-manno-octulosonate cytidylyltransferase"/>
    <property type="match status" value="1"/>
</dbReference>
<dbReference type="Gene3D" id="3.90.550.10">
    <property type="entry name" value="Spore Coat Polysaccharide Biosynthesis Protein SpsA, Chain A"/>
    <property type="match status" value="1"/>
</dbReference>
<dbReference type="HAMAP" id="MF_00057">
    <property type="entry name" value="KdsB"/>
    <property type="match status" value="1"/>
</dbReference>
<dbReference type="InterPro" id="IPR003329">
    <property type="entry name" value="Cytidylyl_trans"/>
</dbReference>
<dbReference type="InterPro" id="IPR004528">
    <property type="entry name" value="KdsB"/>
</dbReference>
<dbReference type="InterPro" id="IPR029044">
    <property type="entry name" value="Nucleotide-diphossugar_trans"/>
</dbReference>
<dbReference type="NCBIfam" id="TIGR00466">
    <property type="entry name" value="kdsB"/>
    <property type="match status" value="1"/>
</dbReference>
<dbReference type="NCBIfam" id="NF003950">
    <property type="entry name" value="PRK05450.1-3"/>
    <property type="match status" value="1"/>
</dbReference>
<dbReference type="NCBIfam" id="NF003952">
    <property type="entry name" value="PRK05450.1-5"/>
    <property type="match status" value="1"/>
</dbReference>
<dbReference type="NCBIfam" id="NF009905">
    <property type="entry name" value="PRK13368.1"/>
    <property type="match status" value="1"/>
</dbReference>
<dbReference type="PANTHER" id="PTHR42866">
    <property type="entry name" value="3-DEOXY-MANNO-OCTULOSONATE CYTIDYLYLTRANSFERASE"/>
    <property type="match status" value="1"/>
</dbReference>
<dbReference type="PANTHER" id="PTHR42866:SF2">
    <property type="entry name" value="3-DEOXY-MANNO-OCTULOSONATE CYTIDYLYLTRANSFERASE, MITOCHONDRIAL"/>
    <property type="match status" value="1"/>
</dbReference>
<dbReference type="Pfam" id="PF02348">
    <property type="entry name" value="CTP_transf_3"/>
    <property type="match status" value="1"/>
</dbReference>
<dbReference type="SUPFAM" id="SSF53448">
    <property type="entry name" value="Nucleotide-diphospho-sugar transferases"/>
    <property type="match status" value="1"/>
</dbReference>